<comment type="function">
    <text evidence="1 2">Component of the ribosome, a large ribonucleoprotein complex responsible for the synthesis of proteins in the cell. The small ribosomal subunit (SSU) binds messenger RNAs (mRNAs) and translates the encoded message by selecting cognate aminoacyl-transfer RNA (tRNA) molecules. The large subunit (LSU) contains the ribosomal catalytic site termed the peptidyl transferase center (PTC), which catalyzes the formation of peptide bonds, thereby polymerizing the amino acids delivered by tRNAs into a polypeptide chain. The nascent polypeptides leave the ribosome through a tunnel in the LSU and interact with protein factors that function in enzymatic processing, targeting, and the membrane insertion of nascent chains at the exit of the ribosomal tunnel (By similarity). eS21 is required for the processing of the 20S rRNA-precursor to mature 18S rRNA in a late step of the maturation of 40S ribosomal subunits. Has a physiological role leading to 18S rRNA stability (PubMed:14623272).</text>
</comment>
<comment type="subunit">
    <text evidence="1 2">Component of the small ribosomal subunit (SSU). Mature yeast ribosomes consist of a small (40S) and a large (60S) subunit. The 40S small subunit contains 1 molecule of ribosomal RNA (18S rRNA) and at least 33 different proteins. The large 60S subunit contains 3 rRNA molecules (25S, 5.8S and 5S rRNA) and at least 46 different proteins (By similarity). Interacts with uS2A and uS2B, strongest interaction is with uS2B (PubMed:14623272).</text>
</comment>
<comment type="subcellular location">
    <subcellularLocation>
        <location evidence="2 3">Cytoplasm</location>
    </subcellularLocation>
    <subcellularLocation>
        <location evidence="3">Nucleus</location>
    </subcellularLocation>
</comment>
<comment type="disruption phenotype">
    <text evidence="2">Deficiency of 40S ribosomal subunit formation, this is likely to be caused by insufficient 18S rRNA stability.</text>
</comment>
<comment type="similarity">
    <text evidence="5">Belongs to the eukaryotic ribosomal protein eS21 family.</text>
</comment>
<name>RS21_SCHPO</name>
<accession>P05764</accession>
<accession>O94496</accession>
<keyword id="KW-0002">3D-structure</keyword>
<keyword id="KW-0007">Acetylation</keyword>
<keyword id="KW-0963">Cytoplasm</keyword>
<keyword id="KW-0903">Direct protein sequencing</keyword>
<keyword id="KW-0539">Nucleus</keyword>
<keyword id="KW-1185">Reference proteome</keyword>
<keyword id="KW-0687">Ribonucleoprotein</keyword>
<keyword id="KW-0689">Ribosomal protein</keyword>
<keyword id="KW-0698">rRNA processing</keyword>
<reference key="1">
    <citation type="journal article" date="1985" name="Biochemistry">
        <title>Primary structures of ribosomal protein YS25 from Saccharomyces cerevisiae and its counterparts from Schizosaccharomyces pombe and rat liver.</title>
        <authorList>
            <person name="Itoh T."/>
            <person name="Otaka E."/>
            <person name="Matsui K.A."/>
        </authorList>
    </citation>
    <scope>PROTEIN SEQUENCE</scope>
    <scope>ACETYLATION AT MET-1</scope>
</reference>
<reference key="2">
    <citation type="journal article" date="2002" name="Nature">
        <title>The genome sequence of Schizosaccharomyces pombe.</title>
        <authorList>
            <person name="Wood V."/>
            <person name="Gwilliam R."/>
            <person name="Rajandream M.A."/>
            <person name="Lyne M.H."/>
            <person name="Lyne R."/>
            <person name="Stewart A."/>
            <person name="Sgouros J.G."/>
            <person name="Peat N."/>
            <person name="Hayles J."/>
            <person name="Baker S.G."/>
            <person name="Basham D."/>
            <person name="Bowman S."/>
            <person name="Brooks K."/>
            <person name="Brown D."/>
            <person name="Brown S."/>
            <person name="Chillingworth T."/>
            <person name="Churcher C.M."/>
            <person name="Collins M."/>
            <person name="Connor R."/>
            <person name="Cronin A."/>
            <person name="Davis P."/>
            <person name="Feltwell T."/>
            <person name="Fraser A."/>
            <person name="Gentles S."/>
            <person name="Goble A."/>
            <person name="Hamlin N."/>
            <person name="Harris D.E."/>
            <person name="Hidalgo J."/>
            <person name="Hodgson G."/>
            <person name="Holroyd S."/>
            <person name="Hornsby T."/>
            <person name="Howarth S."/>
            <person name="Huckle E.J."/>
            <person name="Hunt S."/>
            <person name="Jagels K."/>
            <person name="James K.D."/>
            <person name="Jones L."/>
            <person name="Jones M."/>
            <person name="Leather S."/>
            <person name="McDonald S."/>
            <person name="McLean J."/>
            <person name="Mooney P."/>
            <person name="Moule S."/>
            <person name="Mungall K.L."/>
            <person name="Murphy L.D."/>
            <person name="Niblett D."/>
            <person name="Odell C."/>
            <person name="Oliver K."/>
            <person name="O'Neil S."/>
            <person name="Pearson D."/>
            <person name="Quail M.A."/>
            <person name="Rabbinowitsch E."/>
            <person name="Rutherford K.M."/>
            <person name="Rutter S."/>
            <person name="Saunders D."/>
            <person name="Seeger K."/>
            <person name="Sharp S."/>
            <person name="Skelton J."/>
            <person name="Simmonds M.N."/>
            <person name="Squares R."/>
            <person name="Squares S."/>
            <person name="Stevens K."/>
            <person name="Taylor K."/>
            <person name="Taylor R.G."/>
            <person name="Tivey A."/>
            <person name="Walsh S.V."/>
            <person name="Warren T."/>
            <person name="Whitehead S."/>
            <person name="Woodward J.R."/>
            <person name="Volckaert G."/>
            <person name="Aert R."/>
            <person name="Robben J."/>
            <person name="Grymonprez B."/>
            <person name="Weltjens I."/>
            <person name="Vanstreels E."/>
            <person name="Rieger M."/>
            <person name="Schaefer M."/>
            <person name="Mueller-Auer S."/>
            <person name="Gabel C."/>
            <person name="Fuchs M."/>
            <person name="Duesterhoeft A."/>
            <person name="Fritzc C."/>
            <person name="Holzer E."/>
            <person name="Moestl D."/>
            <person name="Hilbert H."/>
            <person name="Borzym K."/>
            <person name="Langer I."/>
            <person name="Beck A."/>
            <person name="Lehrach H."/>
            <person name="Reinhardt R."/>
            <person name="Pohl T.M."/>
            <person name="Eger P."/>
            <person name="Zimmermann W."/>
            <person name="Wedler H."/>
            <person name="Wambutt R."/>
            <person name="Purnelle B."/>
            <person name="Goffeau A."/>
            <person name="Cadieu E."/>
            <person name="Dreano S."/>
            <person name="Gloux S."/>
            <person name="Lelaure V."/>
            <person name="Mottier S."/>
            <person name="Galibert F."/>
            <person name="Aves S.J."/>
            <person name="Xiang Z."/>
            <person name="Hunt C."/>
            <person name="Moore K."/>
            <person name="Hurst S.M."/>
            <person name="Lucas M."/>
            <person name="Rochet M."/>
            <person name="Gaillardin C."/>
            <person name="Tallada V.A."/>
            <person name="Garzon A."/>
            <person name="Thode G."/>
            <person name="Daga R.R."/>
            <person name="Cruzado L."/>
            <person name="Jimenez J."/>
            <person name="Sanchez M."/>
            <person name="del Rey F."/>
            <person name="Benito J."/>
            <person name="Dominguez A."/>
            <person name="Revuelta J.L."/>
            <person name="Moreno S."/>
            <person name="Armstrong J."/>
            <person name="Forsburg S.L."/>
            <person name="Cerutti L."/>
            <person name="Lowe T."/>
            <person name="McCombie W.R."/>
            <person name="Paulsen I."/>
            <person name="Potashkin J."/>
            <person name="Shpakovski G.V."/>
            <person name="Ussery D."/>
            <person name="Barrell B.G."/>
            <person name="Nurse P."/>
        </authorList>
    </citation>
    <scope>NUCLEOTIDE SEQUENCE [LARGE SCALE GENOMIC DNA]</scope>
    <source>
        <strain>972 / ATCC 24843</strain>
    </source>
</reference>
<reference key="3">
    <citation type="journal article" date="2003" name="Biochem. Biophys. Res. Commun.">
        <title>Ribosomal proteins S0 and S21 are involved in the stability of 18S rRNA in fission yeast, Schizosaccharomyces pombe.</title>
        <authorList>
            <person name="Sato M."/>
            <person name="Kong C.J."/>
            <person name="Yoshida H."/>
            <person name="Nakamura T."/>
            <person name="Wada A."/>
            <person name="Shimoda C."/>
            <person name="Kaneda Y."/>
        </authorList>
    </citation>
    <scope>FUNCTION</scope>
    <scope>INTERACTION WITH RPS0A AND RPS0B</scope>
    <scope>SUBCELLULAR LOCATION</scope>
    <scope>DISRUPTION PHENOTYPE</scope>
</reference>
<reference key="4">
    <citation type="journal article" date="2006" name="Nat. Biotechnol.">
        <title>ORFeome cloning and global analysis of protein localization in the fission yeast Schizosaccharomyces pombe.</title>
        <authorList>
            <person name="Matsuyama A."/>
            <person name="Arai R."/>
            <person name="Yashiroda Y."/>
            <person name="Shirai A."/>
            <person name="Kamata A."/>
            <person name="Sekido S."/>
            <person name="Kobayashi Y."/>
            <person name="Hashimoto A."/>
            <person name="Hamamoto M."/>
            <person name="Hiraoka Y."/>
            <person name="Horinouchi S."/>
            <person name="Yoshida M."/>
        </authorList>
    </citation>
    <scope>SUBCELLULAR LOCATION [LARGE SCALE ANALYSIS]</scope>
</reference>
<protein>
    <recommendedName>
        <fullName evidence="5">Small ribosomal subunit protein eS21</fullName>
    </recommendedName>
    <alternativeName>
        <fullName>40S ribosomal protein S21</fullName>
    </alternativeName>
    <alternativeName>
        <fullName>S28</fullName>
    </alternativeName>
</protein>
<gene>
    <name type="primary">rps21</name>
    <name type="ORF">SPBC18E5.06</name>
</gene>
<proteinExistence type="evidence at protein level"/>
<dbReference type="EMBL" id="CU329671">
    <property type="protein sequence ID" value="CAA22666.1"/>
    <property type="molecule type" value="Genomic_DNA"/>
</dbReference>
<dbReference type="PIR" id="B23862">
    <property type="entry name" value="B23862"/>
</dbReference>
<dbReference type="PIR" id="T39757">
    <property type="entry name" value="T39757"/>
</dbReference>
<dbReference type="RefSeq" id="NP_595852.1">
    <property type="nucleotide sequence ID" value="NM_001021756.2"/>
</dbReference>
<dbReference type="PDB" id="9AXT">
    <property type="method" value="EM"/>
    <property type="resolution" value="2.40 A"/>
    <property type="chains" value="Ab=1-87"/>
</dbReference>
<dbReference type="PDB" id="9AXV">
    <property type="method" value="EM"/>
    <property type="resolution" value="2.40 A"/>
    <property type="chains" value="Ab=1-87"/>
</dbReference>
<dbReference type="PDBsum" id="9AXT"/>
<dbReference type="PDBsum" id="9AXV"/>
<dbReference type="EMDB" id="EMD-43972"/>
<dbReference type="EMDB" id="EMD-43976"/>
<dbReference type="SMR" id="P05764"/>
<dbReference type="BioGRID" id="277325">
    <property type="interactions" value="7"/>
</dbReference>
<dbReference type="FunCoup" id="P05764">
    <property type="interactions" value="481"/>
</dbReference>
<dbReference type="STRING" id="284812.P05764"/>
<dbReference type="iPTMnet" id="P05764"/>
<dbReference type="SwissPalm" id="P05764"/>
<dbReference type="PaxDb" id="4896-SPBC18E5.06.1"/>
<dbReference type="EnsemblFungi" id="SPBC18E5.06.1">
    <property type="protein sequence ID" value="SPBC18E5.06.1:pep"/>
    <property type="gene ID" value="SPBC18E5.06"/>
</dbReference>
<dbReference type="GeneID" id="2540806"/>
<dbReference type="KEGG" id="spo:2540806"/>
<dbReference type="PomBase" id="SPBC18E5.06">
    <property type="gene designation" value="rps21"/>
</dbReference>
<dbReference type="VEuPathDB" id="FungiDB:SPBC18E5.06"/>
<dbReference type="eggNOG" id="KOG3486">
    <property type="taxonomic scope" value="Eukaryota"/>
</dbReference>
<dbReference type="HOGENOM" id="CLU_167122_2_0_1"/>
<dbReference type="InParanoid" id="P05764"/>
<dbReference type="OMA" id="GESDACM"/>
<dbReference type="PhylomeDB" id="P05764"/>
<dbReference type="Reactome" id="R-SPO-156827">
    <property type="pathway name" value="L13a-mediated translational silencing of Ceruloplasmin expression"/>
</dbReference>
<dbReference type="Reactome" id="R-SPO-1799339">
    <property type="pathway name" value="SRP-dependent cotranslational protein targeting to membrane"/>
</dbReference>
<dbReference type="Reactome" id="R-SPO-72649">
    <property type="pathway name" value="Translation initiation complex formation"/>
</dbReference>
<dbReference type="Reactome" id="R-SPO-72689">
    <property type="pathway name" value="Formation of a pool of free 40S subunits"/>
</dbReference>
<dbReference type="Reactome" id="R-SPO-72695">
    <property type="pathway name" value="Formation of the ternary complex, and subsequently, the 43S complex"/>
</dbReference>
<dbReference type="Reactome" id="R-SPO-72702">
    <property type="pathway name" value="Ribosomal scanning and start codon recognition"/>
</dbReference>
<dbReference type="Reactome" id="R-SPO-72706">
    <property type="pathway name" value="GTP hydrolysis and joining of the 60S ribosomal subunit"/>
</dbReference>
<dbReference type="Reactome" id="R-SPO-975956">
    <property type="pathway name" value="Nonsense Mediated Decay (NMD) independent of the Exon Junction Complex (EJC)"/>
</dbReference>
<dbReference type="Reactome" id="R-SPO-975957">
    <property type="pathway name" value="Nonsense Mediated Decay (NMD) enhanced by the Exon Junction Complex (EJC)"/>
</dbReference>
<dbReference type="PRO" id="PR:P05764"/>
<dbReference type="Proteomes" id="UP000002485">
    <property type="component" value="Chromosome II"/>
</dbReference>
<dbReference type="GO" id="GO:0005829">
    <property type="term" value="C:cytosol"/>
    <property type="evidence" value="ECO:0007005"/>
    <property type="project" value="PomBase"/>
</dbReference>
<dbReference type="GO" id="GO:0022627">
    <property type="term" value="C:cytosolic small ribosomal subunit"/>
    <property type="evidence" value="ECO:0000269"/>
    <property type="project" value="PomBase"/>
</dbReference>
<dbReference type="GO" id="GO:0005634">
    <property type="term" value="C:nucleus"/>
    <property type="evidence" value="ECO:0007005"/>
    <property type="project" value="PomBase"/>
</dbReference>
<dbReference type="GO" id="GO:0003735">
    <property type="term" value="F:structural constituent of ribosome"/>
    <property type="evidence" value="ECO:0000318"/>
    <property type="project" value="GO_Central"/>
</dbReference>
<dbReference type="GO" id="GO:0002182">
    <property type="term" value="P:cytoplasmic translational elongation"/>
    <property type="evidence" value="ECO:0000303"/>
    <property type="project" value="PomBase"/>
</dbReference>
<dbReference type="GO" id="GO:0000447">
    <property type="term" value="P:endonucleolytic cleavage in ITS1 to separate SSU-rRNA from 5.8S rRNA and LSU-rRNA from tricistronic rRNA transcript (SSU-rRNA, 5.8S rRNA, LSU-rRNA)"/>
    <property type="evidence" value="ECO:0000318"/>
    <property type="project" value="GO_Central"/>
</dbReference>
<dbReference type="GO" id="GO:0000461">
    <property type="term" value="P:endonucleolytic cleavage to generate mature 3'-end of SSU-rRNA from (SSU-rRNA, 5.8S rRNA, LSU-rRNA)"/>
    <property type="evidence" value="ECO:0000318"/>
    <property type="project" value="GO_Central"/>
</dbReference>
<dbReference type="GO" id="GO:0042274">
    <property type="term" value="P:ribosomal small subunit biogenesis"/>
    <property type="evidence" value="ECO:0000315"/>
    <property type="project" value="PomBase"/>
</dbReference>
<dbReference type="FunFam" id="3.30.1230.20:FF:000001">
    <property type="entry name" value="40S ribosomal protein S21"/>
    <property type="match status" value="1"/>
</dbReference>
<dbReference type="Gene3D" id="3.30.1230.20">
    <property type="match status" value="1"/>
</dbReference>
<dbReference type="InterPro" id="IPR001931">
    <property type="entry name" value="Ribosomal_eS21"/>
</dbReference>
<dbReference type="InterPro" id="IPR018279">
    <property type="entry name" value="Ribosomal_eS21_CS"/>
</dbReference>
<dbReference type="InterPro" id="IPR038579">
    <property type="entry name" value="Ribosomal_eS21_sf"/>
</dbReference>
<dbReference type="PANTHER" id="PTHR10442">
    <property type="entry name" value="40S RIBOSOMAL PROTEIN S21"/>
    <property type="match status" value="1"/>
</dbReference>
<dbReference type="Pfam" id="PF01249">
    <property type="entry name" value="Ribosomal_S21e"/>
    <property type="match status" value="1"/>
</dbReference>
<dbReference type="PIRSF" id="PIRSF002148">
    <property type="entry name" value="Ribosomal_S21e"/>
    <property type="match status" value="1"/>
</dbReference>
<dbReference type="PROSITE" id="PS00996">
    <property type="entry name" value="RIBOSOMAL_S21E"/>
    <property type="match status" value="1"/>
</dbReference>
<evidence type="ECO:0000250" key="1">
    <source>
        <dbReference type="UniProtKB" id="P0C0V8"/>
    </source>
</evidence>
<evidence type="ECO:0000269" key="2">
    <source>
    </source>
</evidence>
<evidence type="ECO:0000269" key="3">
    <source>
    </source>
</evidence>
<evidence type="ECO:0000269" key="4">
    <source>
    </source>
</evidence>
<evidence type="ECO:0000305" key="5"/>
<feature type="chain" id="PRO_0000194760" description="Small ribosomal subunit protein eS21">
    <location>
        <begin position="1"/>
        <end position="87"/>
    </location>
</feature>
<feature type="modified residue" description="N-acetylmethionine" evidence="4">
    <location>
        <position position="1"/>
    </location>
</feature>
<feature type="sequence conflict" description="In Ref. 1; AA sequence." evidence="5" ref="1">
    <original>C</original>
    <variation>A</variation>
    <location>
        <position position="37"/>
    </location>
</feature>
<feature type="sequence conflict" description="In Ref. 1; AA sequence." evidence="5" ref="1">
    <original>A</original>
    <variation>Q</variation>
    <location>
        <position position="41"/>
    </location>
</feature>
<feature type="sequence conflict" description="In Ref. 1; AA sequence." evidence="5" ref="1">
    <original>C</original>
    <variation>D</variation>
    <location>
        <position position="68"/>
    </location>
</feature>
<feature type="sequence conflict" description="In Ref. 1; AA sequence." evidence="5" ref="1">
    <original>T</original>
    <variation>Q</variation>
    <location>
        <position position="73"/>
    </location>
</feature>
<feature type="sequence conflict" description="In Ref. 1; AA sequence." evidence="5" ref="1">
    <original>E</original>
    <variation>T</variation>
    <location>
        <position position="80"/>
    </location>
</feature>
<organism>
    <name type="scientific">Schizosaccharomyces pombe (strain 972 / ATCC 24843)</name>
    <name type="common">Fission yeast</name>
    <dbReference type="NCBI Taxonomy" id="284812"/>
    <lineage>
        <taxon>Eukaryota</taxon>
        <taxon>Fungi</taxon>
        <taxon>Dikarya</taxon>
        <taxon>Ascomycota</taxon>
        <taxon>Taphrinomycotina</taxon>
        <taxon>Schizosaccharomycetes</taxon>
        <taxon>Schizosaccharomycetales</taxon>
        <taxon>Schizosaccharomycetaceae</taxon>
        <taxon>Schizosaccharomyces</taxon>
    </lineage>
</organism>
<sequence>MENEAGQLVDLYVPRKCSATNRIIQAKDHASVQINVCAVDAEGRQIPGEKTTYAISGFVRSKGESDDCINRLTTQDGLLEGVWSYQR</sequence>